<name>DXR_CHLTA</name>
<keyword id="KW-0414">Isoprene biosynthesis</keyword>
<keyword id="KW-0464">Manganese</keyword>
<keyword id="KW-0479">Metal-binding</keyword>
<keyword id="KW-0521">NADP</keyword>
<keyword id="KW-0560">Oxidoreductase</keyword>
<accession>Q3KMV0</accession>
<reference key="1">
    <citation type="journal article" date="2005" name="Infect. Immun.">
        <title>Comparative genomic analysis of Chlamydia trachomatis oculotropic and genitotropic strains.</title>
        <authorList>
            <person name="Carlson J.H."/>
            <person name="Porcella S.F."/>
            <person name="McClarty G."/>
            <person name="Caldwell H.D."/>
        </authorList>
    </citation>
    <scope>NUCLEOTIDE SEQUENCE [LARGE SCALE GENOMIC DNA]</scope>
    <source>
        <strain>ATCC VR-571B / DSM 19440 / HAR-13</strain>
    </source>
</reference>
<comment type="function">
    <text evidence="1">Catalyzes the NADPH-dependent rearrangement and reduction of 1-deoxy-D-xylulose-5-phosphate (DXP) to 2-C-methyl-D-erythritol 4-phosphate (MEP).</text>
</comment>
<comment type="catalytic activity">
    <reaction evidence="1">
        <text>2-C-methyl-D-erythritol 4-phosphate + NADP(+) = 1-deoxy-D-xylulose 5-phosphate + NADPH + H(+)</text>
        <dbReference type="Rhea" id="RHEA:13717"/>
        <dbReference type="ChEBI" id="CHEBI:15378"/>
        <dbReference type="ChEBI" id="CHEBI:57783"/>
        <dbReference type="ChEBI" id="CHEBI:57792"/>
        <dbReference type="ChEBI" id="CHEBI:58262"/>
        <dbReference type="ChEBI" id="CHEBI:58349"/>
        <dbReference type="EC" id="1.1.1.267"/>
    </reaction>
    <physiologicalReaction direction="right-to-left" evidence="1">
        <dbReference type="Rhea" id="RHEA:13719"/>
    </physiologicalReaction>
</comment>
<comment type="cofactor">
    <cofactor evidence="1">
        <name>Mg(2+)</name>
        <dbReference type="ChEBI" id="CHEBI:18420"/>
    </cofactor>
    <cofactor evidence="1">
        <name>Mn(2+)</name>
        <dbReference type="ChEBI" id="CHEBI:29035"/>
    </cofactor>
</comment>
<comment type="pathway">
    <text evidence="1">Isoprenoid biosynthesis; isopentenyl diphosphate biosynthesis via DXP pathway; isopentenyl diphosphate from 1-deoxy-D-xylulose 5-phosphate: step 1/6.</text>
</comment>
<comment type="similarity">
    <text evidence="1">Belongs to the DXR family.</text>
</comment>
<protein>
    <recommendedName>
        <fullName evidence="1">1-deoxy-D-xylulose 5-phosphate reductoisomerase</fullName>
        <shortName evidence="1">DXP reductoisomerase</shortName>
        <ecNumber evidence="1">1.1.1.267</ecNumber>
    </recommendedName>
    <alternativeName>
        <fullName evidence="1">1-deoxyxylulose-5-phosphate reductoisomerase</fullName>
    </alternativeName>
    <alternativeName>
        <fullName evidence="1">2-C-methyl-D-erythritol 4-phosphate synthase</fullName>
    </alternativeName>
</protein>
<gene>
    <name evidence="1" type="primary">dxr</name>
    <name type="ordered locus">CTA_0076</name>
</gene>
<organism>
    <name type="scientific">Chlamydia trachomatis serovar A (strain ATCC VR-571B / DSM 19440 / HAR-13)</name>
    <dbReference type="NCBI Taxonomy" id="315277"/>
    <lineage>
        <taxon>Bacteria</taxon>
        <taxon>Pseudomonadati</taxon>
        <taxon>Chlamydiota</taxon>
        <taxon>Chlamydiia</taxon>
        <taxon>Chlamydiales</taxon>
        <taxon>Chlamydiaceae</taxon>
        <taxon>Chlamydia/Chlamydophila group</taxon>
        <taxon>Chlamydia</taxon>
    </lineage>
</organism>
<feature type="chain" id="PRO_1000020245" description="1-deoxy-D-xylulose 5-phosphate reductoisomerase">
    <location>
        <begin position="1"/>
        <end position="379"/>
    </location>
</feature>
<feature type="binding site" evidence="1">
    <location>
        <position position="10"/>
    </location>
    <ligand>
        <name>NADPH</name>
        <dbReference type="ChEBI" id="CHEBI:57783"/>
    </ligand>
</feature>
<feature type="binding site" evidence="1">
    <location>
        <position position="11"/>
    </location>
    <ligand>
        <name>NADPH</name>
        <dbReference type="ChEBI" id="CHEBI:57783"/>
    </ligand>
</feature>
<feature type="binding site" evidence="1">
    <location>
        <position position="12"/>
    </location>
    <ligand>
        <name>NADPH</name>
        <dbReference type="ChEBI" id="CHEBI:57783"/>
    </ligand>
</feature>
<feature type="binding site" evidence="1">
    <location>
        <position position="13"/>
    </location>
    <ligand>
        <name>NADPH</name>
        <dbReference type="ChEBI" id="CHEBI:57783"/>
    </ligand>
</feature>
<feature type="binding site" evidence="1">
    <location>
        <position position="38"/>
    </location>
    <ligand>
        <name>NADPH</name>
        <dbReference type="ChEBI" id="CHEBI:57783"/>
    </ligand>
</feature>
<feature type="binding site" evidence="1">
    <location>
        <position position="39"/>
    </location>
    <ligand>
        <name>NADPH</name>
        <dbReference type="ChEBI" id="CHEBI:57783"/>
    </ligand>
</feature>
<feature type="binding site" evidence="1">
    <location>
        <position position="121"/>
    </location>
    <ligand>
        <name>NADPH</name>
        <dbReference type="ChEBI" id="CHEBI:57783"/>
    </ligand>
</feature>
<feature type="binding site" evidence="1">
    <location>
        <position position="122"/>
    </location>
    <ligand>
        <name>1-deoxy-D-xylulose 5-phosphate</name>
        <dbReference type="ChEBI" id="CHEBI:57792"/>
    </ligand>
</feature>
<feature type="binding site" evidence="1">
    <location>
        <position position="123"/>
    </location>
    <ligand>
        <name>NADPH</name>
        <dbReference type="ChEBI" id="CHEBI:57783"/>
    </ligand>
</feature>
<feature type="binding site" evidence="1">
    <location>
        <position position="147"/>
    </location>
    <ligand>
        <name>Mn(2+)</name>
        <dbReference type="ChEBI" id="CHEBI:29035"/>
    </ligand>
</feature>
<feature type="binding site" evidence="1">
    <location>
        <position position="148"/>
    </location>
    <ligand>
        <name>1-deoxy-D-xylulose 5-phosphate</name>
        <dbReference type="ChEBI" id="CHEBI:57792"/>
    </ligand>
</feature>
<feature type="binding site" evidence="1">
    <location>
        <position position="149"/>
    </location>
    <ligand>
        <name>1-deoxy-D-xylulose 5-phosphate</name>
        <dbReference type="ChEBI" id="CHEBI:57792"/>
    </ligand>
</feature>
<feature type="binding site" evidence="1">
    <location>
        <position position="149"/>
    </location>
    <ligand>
        <name>Mn(2+)</name>
        <dbReference type="ChEBI" id="CHEBI:29035"/>
    </ligand>
</feature>
<feature type="binding site" evidence="1">
    <location>
        <position position="173"/>
    </location>
    <ligand>
        <name>1-deoxy-D-xylulose 5-phosphate</name>
        <dbReference type="ChEBI" id="CHEBI:57792"/>
    </ligand>
</feature>
<feature type="binding site" evidence="1">
    <location>
        <position position="196"/>
    </location>
    <ligand>
        <name>1-deoxy-D-xylulose 5-phosphate</name>
        <dbReference type="ChEBI" id="CHEBI:57792"/>
    </ligand>
</feature>
<feature type="binding site" evidence="1">
    <location>
        <position position="202"/>
    </location>
    <ligand>
        <name>NADPH</name>
        <dbReference type="ChEBI" id="CHEBI:57783"/>
    </ligand>
</feature>
<feature type="binding site" evidence="1">
    <location>
        <position position="209"/>
    </location>
    <ligand>
        <name>1-deoxy-D-xylulose 5-phosphate</name>
        <dbReference type="ChEBI" id="CHEBI:57792"/>
    </ligand>
</feature>
<feature type="binding site" evidence="1">
    <location>
        <position position="214"/>
    </location>
    <ligand>
        <name>1-deoxy-D-xylulose 5-phosphate</name>
        <dbReference type="ChEBI" id="CHEBI:57792"/>
    </ligand>
</feature>
<feature type="binding site" evidence="1">
    <location>
        <position position="215"/>
    </location>
    <ligand>
        <name>1-deoxy-D-xylulose 5-phosphate</name>
        <dbReference type="ChEBI" id="CHEBI:57792"/>
    </ligand>
</feature>
<feature type="binding site" evidence="1">
    <location>
        <position position="218"/>
    </location>
    <ligand>
        <name>1-deoxy-D-xylulose 5-phosphate</name>
        <dbReference type="ChEBI" id="CHEBI:57792"/>
    </ligand>
</feature>
<feature type="binding site" evidence="1">
    <location>
        <position position="218"/>
    </location>
    <ligand>
        <name>Mn(2+)</name>
        <dbReference type="ChEBI" id="CHEBI:29035"/>
    </ligand>
</feature>
<evidence type="ECO:0000255" key="1">
    <source>
        <dbReference type="HAMAP-Rule" id="MF_00183"/>
    </source>
</evidence>
<sequence length="379" mass="41762">MKHLALIGSTGSIGRQVLQVVRSIPDTFIIETLAAYGRNQEALISQIREFNPRVVAVREETTYKELRKLFPHIEILLGEEGLVSVATEPSVTMTIVASSGIDALPAVIAAIRQKKTIALANKESLVAAGELVTTLARENGVQILPIDSEHNALFQCLEGRDSSTIKKLLLTASGGPLRNKSKEELQKVSLQEVLRHPVWNMGPKITVDSSTLVNKGLEIIEAFWLFGLEAVEIEAVIHPQSLVHGMVEFCDGTILSVMNPPSMLFPIQHVLTFPERSPAIGPGFDFLSNRTLEFFPIDEDRFPSVHLAKRVLLEKGSMGCFFNGANEALVHRFLAGEISWHQIVPKLQALVDQHRVQSCLSLEEILSVDAEARARAQEC</sequence>
<dbReference type="EC" id="1.1.1.267" evidence="1"/>
<dbReference type="EMBL" id="CP000051">
    <property type="protein sequence ID" value="AAX50322.1"/>
    <property type="molecule type" value="Genomic_DNA"/>
</dbReference>
<dbReference type="RefSeq" id="WP_009871420.1">
    <property type="nucleotide sequence ID" value="NC_007429.1"/>
</dbReference>
<dbReference type="SMR" id="Q3KMV0"/>
<dbReference type="KEGG" id="cta:CTA_0076"/>
<dbReference type="HOGENOM" id="CLU_035714_4_0_0"/>
<dbReference type="UniPathway" id="UPA00056">
    <property type="reaction ID" value="UER00092"/>
</dbReference>
<dbReference type="Proteomes" id="UP000002532">
    <property type="component" value="Chromosome"/>
</dbReference>
<dbReference type="GO" id="GO:0030604">
    <property type="term" value="F:1-deoxy-D-xylulose-5-phosphate reductoisomerase activity"/>
    <property type="evidence" value="ECO:0007669"/>
    <property type="project" value="UniProtKB-UniRule"/>
</dbReference>
<dbReference type="GO" id="GO:0030145">
    <property type="term" value="F:manganese ion binding"/>
    <property type="evidence" value="ECO:0007669"/>
    <property type="project" value="TreeGrafter"/>
</dbReference>
<dbReference type="GO" id="GO:0070402">
    <property type="term" value="F:NADPH binding"/>
    <property type="evidence" value="ECO:0007669"/>
    <property type="project" value="InterPro"/>
</dbReference>
<dbReference type="GO" id="GO:0051484">
    <property type="term" value="P:isopentenyl diphosphate biosynthetic process, methylerythritol 4-phosphate pathway involved in terpenoid biosynthetic process"/>
    <property type="evidence" value="ECO:0007669"/>
    <property type="project" value="TreeGrafter"/>
</dbReference>
<dbReference type="FunFam" id="3.40.50.720:FF:000045">
    <property type="entry name" value="1-deoxy-D-xylulose 5-phosphate reductoisomerase"/>
    <property type="match status" value="1"/>
</dbReference>
<dbReference type="Gene3D" id="1.10.1740.10">
    <property type="match status" value="1"/>
</dbReference>
<dbReference type="Gene3D" id="3.40.50.720">
    <property type="entry name" value="NAD(P)-binding Rossmann-like Domain"/>
    <property type="match status" value="1"/>
</dbReference>
<dbReference type="HAMAP" id="MF_00183">
    <property type="entry name" value="DXP_reductoisom"/>
    <property type="match status" value="1"/>
</dbReference>
<dbReference type="InterPro" id="IPR003821">
    <property type="entry name" value="DXP_reductoisomerase"/>
</dbReference>
<dbReference type="InterPro" id="IPR013644">
    <property type="entry name" value="DXP_reductoisomerase_C"/>
</dbReference>
<dbReference type="InterPro" id="IPR013512">
    <property type="entry name" value="DXP_reductoisomerase_N"/>
</dbReference>
<dbReference type="InterPro" id="IPR026877">
    <property type="entry name" value="DXPR_C"/>
</dbReference>
<dbReference type="InterPro" id="IPR036169">
    <property type="entry name" value="DXPR_C_sf"/>
</dbReference>
<dbReference type="InterPro" id="IPR036291">
    <property type="entry name" value="NAD(P)-bd_dom_sf"/>
</dbReference>
<dbReference type="NCBIfam" id="TIGR00243">
    <property type="entry name" value="Dxr"/>
    <property type="match status" value="1"/>
</dbReference>
<dbReference type="PANTHER" id="PTHR30525">
    <property type="entry name" value="1-DEOXY-D-XYLULOSE 5-PHOSPHATE REDUCTOISOMERASE"/>
    <property type="match status" value="1"/>
</dbReference>
<dbReference type="PANTHER" id="PTHR30525:SF0">
    <property type="entry name" value="1-DEOXY-D-XYLULOSE 5-PHOSPHATE REDUCTOISOMERASE, CHLOROPLASTIC"/>
    <property type="match status" value="1"/>
</dbReference>
<dbReference type="Pfam" id="PF08436">
    <property type="entry name" value="DXP_redisom_C"/>
    <property type="match status" value="1"/>
</dbReference>
<dbReference type="Pfam" id="PF02670">
    <property type="entry name" value="DXP_reductoisom"/>
    <property type="match status" value="1"/>
</dbReference>
<dbReference type="Pfam" id="PF13288">
    <property type="entry name" value="DXPR_C"/>
    <property type="match status" value="1"/>
</dbReference>
<dbReference type="PIRSF" id="PIRSF006205">
    <property type="entry name" value="Dxp_reductismrs"/>
    <property type="match status" value="1"/>
</dbReference>
<dbReference type="SUPFAM" id="SSF69055">
    <property type="entry name" value="1-deoxy-D-xylulose-5-phosphate reductoisomerase, C-terminal domain"/>
    <property type="match status" value="1"/>
</dbReference>
<dbReference type="SUPFAM" id="SSF55347">
    <property type="entry name" value="Glyceraldehyde-3-phosphate dehydrogenase-like, C-terminal domain"/>
    <property type="match status" value="1"/>
</dbReference>
<dbReference type="SUPFAM" id="SSF51735">
    <property type="entry name" value="NAD(P)-binding Rossmann-fold domains"/>
    <property type="match status" value="1"/>
</dbReference>
<proteinExistence type="inferred from homology"/>